<keyword id="KW-0342">GTP-binding</keyword>
<keyword id="KW-0547">Nucleotide-binding</keyword>
<keyword id="KW-0539">Nucleus</keyword>
<keyword id="KW-1185">Reference proteome</keyword>
<keyword id="KW-0690">Ribosome biogenesis</keyword>
<gene>
    <name type="primary">NOG2</name>
    <name type="ordered locus">ABR120C</name>
</gene>
<dbReference type="EMBL" id="AE016815">
    <property type="protein sequence ID" value="AAS50891.1"/>
    <property type="molecule type" value="Genomic_DNA"/>
</dbReference>
<dbReference type="RefSeq" id="NP_983067.1">
    <property type="nucleotide sequence ID" value="NM_208420.1"/>
</dbReference>
<dbReference type="SMR" id="Q75DA4"/>
<dbReference type="FunCoup" id="Q75DA4">
    <property type="interactions" value="946"/>
</dbReference>
<dbReference type="STRING" id="284811.Q75DA4"/>
<dbReference type="EnsemblFungi" id="AAS50891">
    <property type="protein sequence ID" value="AAS50891"/>
    <property type="gene ID" value="AGOS_ABR120C"/>
</dbReference>
<dbReference type="GeneID" id="4619174"/>
<dbReference type="KEGG" id="ago:AGOS_ABR120C"/>
<dbReference type="eggNOG" id="KOG2423">
    <property type="taxonomic scope" value="Eukaryota"/>
</dbReference>
<dbReference type="HOGENOM" id="CLU_011106_4_0_1"/>
<dbReference type="InParanoid" id="Q75DA4"/>
<dbReference type="OMA" id="RTQGFNH"/>
<dbReference type="OrthoDB" id="444945at2759"/>
<dbReference type="Proteomes" id="UP000000591">
    <property type="component" value="Chromosome II"/>
</dbReference>
<dbReference type="GO" id="GO:0005730">
    <property type="term" value="C:nucleolus"/>
    <property type="evidence" value="ECO:0000318"/>
    <property type="project" value="GO_Central"/>
</dbReference>
<dbReference type="GO" id="GO:0005525">
    <property type="term" value="F:GTP binding"/>
    <property type="evidence" value="ECO:0007669"/>
    <property type="project" value="UniProtKB-KW"/>
</dbReference>
<dbReference type="GO" id="GO:0042254">
    <property type="term" value="P:ribosome biogenesis"/>
    <property type="evidence" value="ECO:0007669"/>
    <property type="project" value="UniProtKB-KW"/>
</dbReference>
<dbReference type="CDD" id="cd01858">
    <property type="entry name" value="NGP_1"/>
    <property type="match status" value="1"/>
</dbReference>
<dbReference type="FunFam" id="3.40.50.300:FF:000559">
    <property type="entry name" value="Nuclear/nucleolar GTPase 2"/>
    <property type="match status" value="1"/>
</dbReference>
<dbReference type="FunFam" id="1.10.1580.10:FF:000005">
    <property type="entry name" value="Nucleolar GTP-binding protein 2"/>
    <property type="match status" value="1"/>
</dbReference>
<dbReference type="Gene3D" id="1.10.1580.10">
    <property type="match status" value="1"/>
</dbReference>
<dbReference type="Gene3D" id="3.40.50.300">
    <property type="entry name" value="P-loop containing nucleotide triphosphate hydrolases"/>
    <property type="match status" value="1"/>
</dbReference>
<dbReference type="InterPro" id="IPR030378">
    <property type="entry name" value="G_CP_dom"/>
</dbReference>
<dbReference type="InterPro" id="IPR024929">
    <property type="entry name" value="GNL2_CP_dom"/>
</dbReference>
<dbReference type="InterPro" id="IPR006073">
    <property type="entry name" value="GTP-bd"/>
</dbReference>
<dbReference type="InterPro" id="IPR023179">
    <property type="entry name" value="GTP-bd_ortho_bundle_sf"/>
</dbReference>
<dbReference type="InterPro" id="IPR012971">
    <property type="entry name" value="NOG2_N_dom"/>
</dbReference>
<dbReference type="InterPro" id="IPR027417">
    <property type="entry name" value="P-loop_NTPase"/>
</dbReference>
<dbReference type="InterPro" id="IPR050755">
    <property type="entry name" value="TRAFAC_YlqF/YawG_RiboMat"/>
</dbReference>
<dbReference type="PANTHER" id="PTHR11089">
    <property type="entry name" value="GTP-BINDING PROTEIN-RELATED"/>
    <property type="match status" value="1"/>
</dbReference>
<dbReference type="PANTHER" id="PTHR11089:SF9">
    <property type="entry name" value="NUCLEOLAR GTP-BINDING PROTEIN 2"/>
    <property type="match status" value="1"/>
</dbReference>
<dbReference type="Pfam" id="PF01926">
    <property type="entry name" value="MMR_HSR1"/>
    <property type="match status" value="1"/>
</dbReference>
<dbReference type="Pfam" id="PF08153">
    <property type="entry name" value="NGP1NT"/>
    <property type="match status" value="1"/>
</dbReference>
<dbReference type="PRINTS" id="PR00326">
    <property type="entry name" value="GTP1OBG"/>
</dbReference>
<dbReference type="SUPFAM" id="SSF52540">
    <property type="entry name" value="P-loop containing nucleoside triphosphate hydrolases"/>
    <property type="match status" value="1"/>
</dbReference>
<dbReference type="PROSITE" id="PS51721">
    <property type="entry name" value="G_CP"/>
    <property type="match status" value="1"/>
</dbReference>
<accession>Q75DA4</accession>
<proteinExistence type="inferred from homology"/>
<sequence length="502" mass="56993">MGTAKKEQQRRIREGNTKDGNLRVKGENFYRDGKRVKFLNMYKGGKSIRNAKGDLIRAAPLQSTDVPTARVQPDRRWFGNTRVISQDALQHFRDALGDKKNDSYQVLLRRNKLPMSLLEEKDTSESPTAKIIDTEPYGATFGPKAQRKKPRVAAASLEDLAKATDSDSQKYEEKKELDSTLGLMAATEQEDGWSQVAKEAIFHKGQSKRIWNELYKVIDSSDVVIHVLDARDPLGTRCKSVEEYMKKETPHKHLIYVLNKCDLVPTWLAAAWVKHLSKDRPTLAFHASITNSFGKGSLIQLLRQFSQLHKDRQQISVGFIGYPNTGKSSIINTLRKKKVCQVAPIPGETKVWQYITLMKRIFLIDCPGIVPPSAKDTEEDILFRGVVRVEHVSHPEQYIPAVLRRCKRHHLERTYEISGWADATEFIEMLARKQGRLLKGGEPDETGVAKQVLNDFNRGKIPWFVSPPDRDPQPETSKRPADSEPETAQEAPEPPANKRLRV</sequence>
<evidence type="ECO:0000250" key="1"/>
<evidence type="ECO:0000255" key="2"/>
<evidence type="ECO:0000255" key="3">
    <source>
        <dbReference type="PROSITE-ProRule" id="PRU01058"/>
    </source>
</evidence>
<evidence type="ECO:0000256" key="4">
    <source>
        <dbReference type="SAM" id="MobiDB-lite"/>
    </source>
</evidence>
<organism>
    <name type="scientific">Eremothecium gossypii (strain ATCC 10895 / CBS 109.51 / FGSC 9923 / NRRL Y-1056)</name>
    <name type="common">Yeast</name>
    <name type="synonym">Ashbya gossypii</name>
    <dbReference type="NCBI Taxonomy" id="284811"/>
    <lineage>
        <taxon>Eukaryota</taxon>
        <taxon>Fungi</taxon>
        <taxon>Dikarya</taxon>
        <taxon>Ascomycota</taxon>
        <taxon>Saccharomycotina</taxon>
        <taxon>Saccharomycetes</taxon>
        <taxon>Saccharomycetales</taxon>
        <taxon>Saccharomycetaceae</taxon>
        <taxon>Eremothecium</taxon>
    </lineage>
</organism>
<reference key="1">
    <citation type="journal article" date="2004" name="Science">
        <title>The Ashbya gossypii genome as a tool for mapping the ancient Saccharomyces cerevisiae genome.</title>
        <authorList>
            <person name="Dietrich F.S."/>
            <person name="Voegeli S."/>
            <person name="Brachat S."/>
            <person name="Lerch A."/>
            <person name="Gates K."/>
            <person name="Steiner S."/>
            <person name="Mohr C."/>
            <person name="Poehlmann R."/>
            <person name="Luedi P."/>
            <person name="Choi S."/>
            <person name="Wing R.A."/>
            <person name="Flavier A."/>
            <person name="Gaffney T.D."/>
            <person name="Philippsen P."/>
        </authorList>
    </citation>
    <scope>NUCLEOTIDE SEQUENCE [LARGE SCALE GENOMIC DNA]</scope>
    <source>
        <strain>ATCC 10895 / CBS 109.51 / FGSC 9923 / NRRL Y-1056</strain>
    </source>
</reference>
<reference key="2">
    <citation type="journal article" date="2013" name="G3 (Bethesda)">
        <title>Genomes of Ashbya fungi isolated from insects reveal four mating-type loci, numerous translocations, lack of transposons, and distinct gene duplications.</title>
        <authorList>
            <person name="Dietrich F.S."/>
            <person name="Voegeli S."/>
            <person name="Kuo S."/>
            <person name="Philippsen P."/>
        </authorList>
    </citation>
    <scope>GENOME REANNOTATION</scope>
    <source>
        <strain>ATCC 10895 / CBS 109.51 / FGSC 9923 / NRRL Y-1056</strain>
    </source>
</reference>
<name>NOG2_EREGS</name>
<comment type="function">
    <text evidence="1">GTPase that associates with pre-60S ribosomal subunits in the nucleolus and is required for their nuclear export and maturation.</text>
</comment>
<comment type="subcellular location">
    <subcellularLocation>
        <location evidence="1">Nucleus</location>
        <location evidence="1">Nucleolus</location>
    </subcellularLocation>
</comment>
<comment type="similarity">
    <text evidence="3">Belongs to the TRAFAC class YlqF/YawG GTPase family. NOG2 subfamily.</text>
</comment>
<protein>
    <recommendedName>
        <fullName>Nucleolar GTP-binding protein 2</fullName>
    </recommendedName>
</protein>
<feature type="chain" id="PRO_0000215808" description="Nucleolar GTP-binding protein 2">
    <location>
        <begin position="1"/>
        <end position="502"/>
    </location>
</feature>
<feature type="domain" description="CP-type G" evidence="3">
    <location>
        <begin position="211"/>
        <end position="372"/>
    </location>
</feature>
<feature type="region of interest" description="Disordered" evidence="4">
    <location>
        <begin position="1"/>
        <end position="20"/>
    </location>
</feature>
<feature type="region of interest" description="Disordered" evidence="4">
    <location>
        <begin position="459"/>
        <end position="502"/>
    </location>
</feature>
<feature type="compositionally biased region" description="Basic and acidic residues" evidence="4">
    <location>
        <begin position="468"/>
        <end position="482"/>
    </location>
</feature>
<feature type="binding site" evidence="2">
    <location>
        <begin position="321"/>
        <end position="328"/>
    </location>
    <ligand>
        <name>GTP</name>
        <dbReference type="ChEBI" id="CHEBI:37565"/>
    </ligand>
</feature>
<feature type="binding site" evidence="2">
    <location>
        <begin position="365"/>
        <end position="369"/>
    </location>
    <ligand>
        <name>GTP</name>
        <dbReference type="ChEBI" id="CHEBI:37565"/>
    </ligand>
</feature>